<accession>Q2NW08</accession>
<gene>
    <name evidence="1" type="primary">prfC</name>
    <name type="ordered locus">SG0392</name>
</gene>
<dbReference type="EMBL" id="AP008232">
    <property type="protein sequence ID" value="BAE73667.1"/>
    <property type="molecule type" value="Genomic_DNA"/>
</dbReference>
<dbReference type="RefSeq" id="WP_011410255.1">
    <property type="nucleotide sequence ID" value="NC_007712.1"/>
</dbReference>
<dbReference type="SMR" id="Q2NW08"/>
<dbReference type="STRING" id="343509.SG0392"/>
<dbReference type="KEGG" id="sgl:SG0392"/>
<dbReference type="eggNOG" id="COG4108">
    <property type="taxonomic scope" value="Bacteria"/>
</dbReference>
<dbReference type="HOGENOM" id="CLU_002794_2_1_6"/>
<dbReference type="OrthoDB" id="9801472at2"/>
<dbReference type="BioCyc" id="SGLO343509:SGP1_RS03650-MONOMER"/>
<dbReference type="Proteomes" id="UP000001932">
    <property type="component" value="Chromosome"/>
</dbReference>
<dbReference type="GO" id="GO:0005829">
    <property type="term" value="C:cytosol"/>
    <property type="evidence" value="ECO:0007669"/>
    <property type="project" value="TreeGrafter"/>
</dbReference>
<dbReference type="GO" id="GO:0005525">
    <property type="term" value="F:GTP binding"/>
    <property type="evidence" value="ECO:0007669"/>
    <property type="project" value="UniProtKB-UniRule"/>
</dbReference>
<dbReference type="GO" id="GO:0003924">
    <property type="term" value="F:GTPase activity"/>
    <property type="evidence" value="ECO:0007669"/>
    <property type="project" value="InterPro"/>
</dbReference>
<dbReference type="GO" id="GO:0097216">
    <property type="term" value="F:guanosine tetraphosphate binding"/>
    <property type="evidence" value="ECO:0007669"/>
    <property type="project" value="UniProtKB-ARBA"/>
</dbReference>
<dbReference type="GO" id="GO:0016150">
    <property type="term" value="F:translation release factor activity, codon nonspecific"/>
    <property type="evidence" value="ECO:0007669"/>
    <property type="project" value="TreeGrafter"/>
</dbReference>
<dbReference type="GO" id="GO:0016149">
    <property type="term" value="F:translation release factor activity, codon specific"/>
    <property type="evidence" value="ECO:0007669"/>
    <property type="project" value="UniProtKB-UniRule"/>
</dbReference>
<dbReference type="GO" id="GO:0006449">
    <property type="term" value="P:regulation of translational termination"/>
    <property type="evidence" value="ECO:0007669"/>
    <property type="project" value="UniProtKB-UniRule"/>
</dbReference>
<dbReference type="CDD" id="cd04169">
    <property type="entry name" value="RF3"/>
    <property type="match status" value="1"/>
</dbReference>
<dbReference type="CDD" id="cd03689">
    <property type="entry name" value="RF3_II"/>
    <property type="match status" value="1"/>
</dbReference>
<dbReference type="CDD" id="cd16259">
    <property type="entry name" value="RF3_III"/>
    <property type="match status" value="1"/>
</dbReference>
<dbReference type="FunFam" id="3.30.70.3280:FF:000001">
    <property type="entry name" value="Peptide chain release factor 3"/>
    <property type="match status" value="1"/>
</dbReference>
<dbReference type="FunFam" id="3.40.50.300:FF:000184">
    <property type="entry name" value="Peptide chain release factor 3"/>
    <property type="match status" value="1"/>
</dbReference>
<dbReference type="FunFam" id="3.40.50.300:FF:000253">
    <property type="entry name" value="Peptide chain release factor 3"/>
    <property type="match status" value="1"/>
</dbReference>
<dbReference type="Gene3D" id="3.40.50.300">
    <property type="entry name" value="P-loop containing nucleotide triphosphate hydrolases"/>
    <property type="match status" value="2"/>
</dbReference>
<dbReference type="Gene3D" id="3.30.70.3280">
    <property type="entry name" value="Peptide chain release factor 3, domain III"/>
    <property type="match status" value="1"/>
</dbReference>
<dbReference type="HAMAP" id="MF_00072">
    <property type="entry name" value="Rel_fac_3"/>
    <property type="match status" value="1"/>
</dbReference>
<dbReference type="InterPro" id="IPR053905">
    <property type="entry name" value="EF-G-like_DII"/>
</dbReference>
<dbReference type="InterPro" id="IPR035647">
    <property type="entry name" value="EFG_III/V"/>
</dbReference>
<dbReference type="InterPro" id="IPR031157">
    <property type="entry name" value="G_TR_CS"/>
</dbReference>
<dbReference type="InterPro" id="IPR027417">
    <property type="entry name" value="P-loop_NTPase"/>
</dbReference>
<dbReference type="InterPro" id="IPR004548">
    <property type="entry name" value="PrfC"/>
</dbReference>
<dbReference type="InterPro" id="IPR032090">
    <property type="entry name" value="RF3_C"/>
</dbReference>
<dbReference type="InterPro" id="IPR038467">
    <property type="entry name" value="RF3_dom_3_sf"/>
</dbReference>
<dbReference type="InterPro" id="IPR041732">
    <property type="entry name" value="RF3_GTP-bd"/>
</dbReference>
<dbReference type="InterPro" id="IPR005225">
    <property type="entry name" value="Small_GTP-bd"/>
</dbReference>
<dbReference type="InterPro" id="IPR000795">
    <property type="entry name" value="T_Tr_GTP-bd_dom"/>
</dbReference>
<dbReference type="InterPro" id="IPR009000">
    <property type="entry name" value="Transl_B-barrel_sf"/>
</dbReference>
<dbReference type="NCBIfam" id="TIGR00503">
    <property type="entry name" value="prfC"/>
    <property type="match status" value="1"/>
</dbReference>
<dbReference type="NCBIfam" id="NF001964">
    <property type="entry name" value="PRK00741.1"/>
    <property type="match status" value="1"/>
</dbReference>
<dbReference type="NCBIfam" id="TIGR00231">
    <property type="entry name" value="small_GTP"/>
    <property type="match status" value="1"/>
</dbReference>
<dbReference type="PANTHER" id="PTHR43556">
    <property type="entry name" value="PEPTIDE CHAIN RELEASE FACTOR RF3"/>
    <property type="match status" value="1"/>
</dbReference>
<dbReference type="PANTHER" id="PTHR43556:SF2">
    <property type="entry name" value="PEPTIDE CHAIN RELEASE FACTOR RF3"/>
    <property type="match status" value="1"/>
</dbReference>
<dbReference type="Pfam" id="PF22042">
    <property type="entry name" value="EF-G_D2"/>
    <property type="match status" value="1"/>
</dbReference>
<dbReference type="Pfam" id="PF00009">
    <property type="entry name" value="GTP_EFTU"/>
    <property type="match status" value="1"/>
</dbReference>
<dbReference type="Pfam" id="PF16658">
    <property type="entry name" value="RF3_C"/>
    <property type="match status" value="1"/>
</dbReference>
<dbReference type="PRINTS" id="PR00315">
    <property type="entry name" value="ELONGATNFCT"/>
</dbReference>
<dbReference type="SUPFAM" id="SSF54980">
    <property type="entry name" value="EF-G C-terminal domain-like"/>
    <property type="match status" value="1"/>
</dbReference>
<dbReference type="SUPFAM" id="SSF52540">
    <property type="entry name" value="P-loop containing nucleoside triphosphate hydrolases"/>
    <property type="match status" value="1"/>
</dbReference>
<dbReference type="SUPFAM" id="SSF50447">
    <property type="entry name" value="Translation proteins"/>
    <property type="match status" value="1"/>
</dbReference>
<dbReference type="PROSITE" id="PS00301">
    <property type="entry name" value="G_TR_1"/>
    <property type="match status" value="1"/>
</dbReference>
<dbReference type="PROSITE" id="PS51722">
    <property type="entry name" value="G_TR_2"/>
    <property type="match status" value="1"/>
</dbReference>
<sequence length="529" mass="59516">MKNELYADEIAARRTFAIISHPDAGKTTITEKVLLFGQAIQTAGTVKGRGSNQHAKSDWMEMEKQRGISITTSVMQFPYRQALVNLLDTPGHEDFSEDTYRTLTAVDCCLMVIDAAKGVEDRTRKLMEVTRLRDTPILTFMNKVDRDIRDPMELLDEVESELRIACAPITWPIGCGKLFKGIYHLAKDETYLYQSGQGHTIQAVRVVKGLDNPELDQAVGEDLAAQLREELELVQGASHPFDEQAFLAGELTPIFFGTALGNFGIDHMLDGLVAWAPPPMPRQTDVRVVSAREEKFTGFVFKIQANMDPRHRDRVAFLRVVSGRYEKSMKLRQVRTGKDVVIADALTFMAGDRSHIEEAYAGDIIGLHNHGTIQIGDTFTQGEELKFTGIPNFAPELFRRIRLRDPLKQKQLLKGLVQLSEEGAVQVFRPLANNDLIVGAVGVLQFDVVVARLKSEYNVEALYEPVNVSTARWVECGDAKKLEEFKRKNELNLVLDGGDNLSYIAPSMVNLNLTRERYPDIQFHKTREH</sequence>
<evidence type="ECO:0000255" key="1">
    <source>
        <dbReference type="HAMAP-Rule" id="MF_00072"/>
    </source>
</evidence>
<organism>
    <name type="scientific">Sodalis glossinidius (strain morsitans)</name>
    <dbReference type="NCBI Taxonomy" id="343509"/>
    <lineage>
        <taxon>Bacteria</taxon>
        <taxon>Pseudomonadati</taxon>
        <taxon>Pseudomonadota</taxon>
        <taxon>Gammaproteobacteria</taxon>
        <taxon>Enterobacterales</taxon>
        <taxon>Bruguierivoracaceae</taxon>
        <taxon>Sodalis</taxon>
    </lineage>
</organism>
<protein>
    <recommendedName>
        <fullName evidence="1">Peptide chain release factor 3</fullName>
        <shortName evidence="1">RF-3</shortName>
    </recommendedName>
</protein>
<keyword id="KW-0963">Cytoplasm</keyword>
<keyword id="KW-0342">GTP-binding</keyword>
<keyword id="KW-0547">Nucleotide-binding</keyword>
<keyword id="KW-0648">Protein biosynthesis</keyword>
<name>RF3_SODGM</name>
<comment type="function">
    <text evidence="1">Increases the formation of ribosomal termination complexes and stimulates activities of RF-1 and RF-2. It binds guanine nucleotides and has strong preference for UGA stop codons. It may interact directly with the ribosome. The stimulation of RF-1 and RF-2 is significantly reduced by GTP and GDP, but not by GMP.</text>
</comment>
<comment type="subcellular location">
    <subcellularLocation>
        <location evidence="1">Cytoplasm</location>
    </subcellularLocation>
</comment>
<comment type="similarity">
    <text evidence="1">Belongs to the TRAFAC class translation factor GTPase superfamily. Classic translation factor GTPase family. PrfC subfamily.</text>
</comment>
<proteinExistence type="inferred from homology"/>
<reference key="1">
    <citation type="journal article" date="2006" name="Genome Res.">
        <title>Massive genome erosion and functional adaptations provide insights into the symbiotic lifestyle of Sodalis glossinidius in the tsetse host.</title>
        <authorList>
            <person name="Toh H."/>
            <person name="Weiss B.L."/>
            <person name="Perkin S.A.H."/>
            <person name="Yamashita A."/>
            <person name="Oshima K."/>
            <person name="Hattori M."/>
            <person name="Aksoy S."/>
        </authorList>
    </citation>
    <scope>NUCLEOTIDE SEQUENCE [LARGE SCALE GENOMIC DNA]</scope>
    <source>
        <strain>morsitans</strain>
    </source>
</reference>
<feature type="chain" id="PRO_0000242210" description="Peptide chain release factor 3">
    <location>
        <begin position="1"/>
        <end position="529"/>
    </location>
</feature>
<feature type="domain" description="tr-type G">
    <location>
        <begin position="11"/>
        <end position="280"/>
    </location>
</feature>
<feature type="binding site" evidence="1">
    <location>
        <begin position="20"/>
        <end position="27"/>
    </location>
    <ligand>
        <name>GTP</name>
        <dbReference type="ChEBI" id="CHEBI:37565"/>
    </ligand>
</feature>
<feature type="binding site" evidence="1">
    <location>
        <begin position="88"/>
        <end position="92"/>
    </location>
    <ligand>
        <name>GTP</name>
        <dbReference type="ChEBI" id="CHEBI:37565"/>
    </ligand>
</feature>
<feature type="binding site" evidence="1">
    <location>
        <begin position="142"/>
        <end position="145"/>
    </location>
    <ligand>
        <name>GTP</name>
        <dbReference type="ChEBI" id="CHEBI:37565"/>
    </ligand>
</feature>